<protein>
    <recommendedName>
        <fullName>CASP-like protein 2B1</fullName>
        <shortName>PtCASPL2B1</shortName>
    </recommendedName>
</protein>
<accession>B9IH36</accession>
<gene>
    <name type="ORF">POPTRDRAFT_575900</name>
</gene>
<comment type="subunit">
    <text evidence="1">Homodimer and heterodimers.</text>
</comment>
<comment type="subcellular location">
    <subcellularLocation>
        <location evidence="1">Cell membrane</location>
        <topology evidence="1">Multi-pass membrane protein</topology>
    </subcellularLocation>
</comment>
<comment type="similarity">
    <text evidence="3">Belongs to the Casparian strip membrane proteins (CASP) family.</text>
</comment>
<reference key="1">
    <citation type="journal article" date="2006" name="Science">
        <title>The genome of black cottonwood, Populus trichocarpa (Torr. &amp; Gray).</title>
        <authorList>
            <person name="Tuskan G.A."/>
            <person name="Difazio S."/>
            <person name="Jansson S."/>
            <person name="Bohlmann J."/>
            <person name="Grigoriev I."/>
            <person name="Hellsten U."/>
            <person name="Putnam N."/>
            <person name="Ralph S."/>
            <person name="Rombauts S."/>
            <person name="Salamov A."/>
            <person name="Schein J."/>
            <person name="Sterck L."/>
            <person name="Aerts A."/>
            <person name="Bhalerao R.R."/>
            <person name="Bhalerao R.P."/>
            <person name="Blaudez D."/>
            <person name="Boerjan W."/>
            <person name="Brun A."/>
            <person name="Brunner A."/>
            <person name="Busov V."/>
            <person name="Campbell M."/>
            <person name="Carlson J."/>
            <person name="Chalot M."/>
            <person name="Chapman J."/>
            <person name="Chen G.-L."/>
            <person name="Cooper D."/>
            <person name="Coutinho P.M."/>
            <person name="Couturier J."/>
            <person name="Covert S."/>
            <person name="Cronk Q."/>
            <person name="Cunningham R."/>
            <person name="Davis J."/>
            <person name="Degroeve S."/>
            <person name="Dejardin A."/>
            <person name="dePamphilis C.W."/>
            <person name="Detter J."/>
            <person name="Dirks B."/>
            <person name="Dubchak I."/>
            <person name="Duplessis S."/>
            <person name="Ehlting J."/>
            <person name="Ellis B."/>
            <person name="Gendler K."/>
            <person name="Goodstein D."/>
            <person name="Gribskov M."/>
            <person name="Grimwood J."/>
            <person name="Groover A."/>
            <person name="Gunter L."/>
            <person name="Hamberger B."/>
            <person name="Heinze B."/>
            <person name="Helariutta Y."/>
            <person name="Henrissat B."/>
            <person name="Holligan D."/>
            <person name="Holt R."/>
            <person name="Huang W."/>
            <person name="Islam-Faridi N."/>
            <person name="Jones S."/>
            <person name="Jones-Rhoades M."/>
            <person name="Jorgensen R."/>
            <person name="Joshi C."/>
            <person name="Kangasjaervi J."/>
            <person name="Karlsson J."/>
            <person name="Kelleher C."/>
            <person name="Kirkpatrick R."/>
            <person name="Kirst M."/>
            <person name="Kohler A."/>
            <person name="Kalluri U."/>
            <person name="Larimer F."/>
            <person name="Leebens-Mack J."/>
            <person name="Leple J.-C."/>
            <person name="Locascio P."/>
            <person name="Lou Y."/>
            <person name="Lucas S."/>
            <person name="Martin F."/>
            <person name="Montanini B."/>
            <person name="Napoli C."/>
            <person name="Nelson D.R."/>
            <person name="Nelson C."/>
            <person name="Nieminen K."/>
            <person name="Nilsson O."/>
            <person name="Pereda V."/>
            <person name="Peter G."/>
            <person name="Philippe R."/>
            <person name="Pilate G."/>
            <person name="Poliakov A."/>
            <person name="Razumovskaya J."/>
            <person name="Richardson P."/>
            <person name="Rinaldi C."/>
            <person name="Ritland K."/>
            <person name="Rouze P."/>
            <person name="Ryaboy D."/>
            <person name="Schmutz J."/>
            <person name="Schrader J."/>
            <person name="Segerman B."/>
            <person name="Shin H."/>
            <person name="Siddiqui A."/>
            <person name="Sterky F."/>
            <person name="Terry A."/>
            <person name="Tsai C.-J."/>
            <person name="Uberbacher E."/>
            <person name="Unneberg P."/>
            <person name="Vahala J."/>
            <person name="Wall K."/>
            <person name="Wessler S."/>
            <person name="Yang G."/>
            <person name="Yin T."/>
            <person name="Douglas C."/>
            <person name="Marra M."/>
            <person name="Sandberg G."/>
            <person name="Van de Peer Y."/>
            <person name="Rokhsar D.S."/>
        </authorList>
    </citation>
    <scope>NUCLEOTIDE SEQUENCE [LARGE SCALE GENOMIC DNA]</scope>
    <source>
        <strain>cv. Nisqually</strain>
    </source>
</reference>
<reference key="2">
    <citation type="submission" date="2008-12" db="EMBL/GenBank/DDBJ databases">
        <authorList>
            <consortium name="US DOE Joint Genome Institute (JGI-PGF)"/>
            <person name="Grigoriev I.V."/>
            <person name="Terry A."/>
            <person name="Salamov A.A."/>
            <person name="Otillar R."/>
            <person name="Lou Y."/>
            <person name="Lucas S."/>
            <person name="Hammon N."/>
            <person name="Glavina del Rio T."/>
            <person name="Detter J."/>
            <person name="Kalin E."/>
            <person name="Tice H."/>
            <person name="Pitluck S."/>
            <person name="Chapman J."/>
            <person name="Putnam N.H."/>
            <person name="Brunner A."/>
            <person name="Busov V."/>
            <person name="Campbell M."/>
            <person name="Chalot M."/>
            <person name="Covert S."/>
            <person name="Davis J."/>
            <person name="DiFazio S."/>
            <person name="Gribskov M."/>
            <person name="Gunter L."/>
            <person name="Hamberger B."/>
            <person name="Jansson S."/>
            <person name="Joshi C."/>
            <person name="Larimer F."/>
            <person name="Martin F."/>
            <person name="Napoli C."/>
            <person name="Nelson D."/>
            <person name="Ralph S."/>
            <person name="Rombauts S."/>
            <person name="Rouze P."/>
            <person name="Schrader J."/>
            <person name="Tsai C."/>
            <person name="Vahala J."/>
            <person name="Tuskan G."/>
            <person name="Rokhsar D."/>
        </authorList>
    </citation>
    <scope>GENOME REANNOTATION</scope>
    <source>
        <strain>cv. Nisqually</strain>
    </source>
</reference>
<reference key="3">
    <citation type="submission" date="2004-09" db="EMBL/GenBank/DDBJ databases">
        <title>The poplar tree transcriptome: Analysis of expressed sequence tags from multiple libraries.</title>
        <authorList>
            <consortium name="US DOE Joint Genome Institute (JGI-PGF)"/>
        </authorList>
    </citation>
    <scope>NUCLEOTIDE SEQUENCE [LARGE SCALE MRNA] OF 168-202</scope>
    <source>
        <tissue>Xylem</tissue>
    </source>
</reference>
<reference key="4">
    <citation type="journal article" date="2014" name="Plant Physiol.">
        <title>Functional and evolutionary analysis of the CASPARIAN STRIP MEMBRANE DOMAIN PROTEIN family.</title>
        <authorList>
            <person name="Roppolo D."/>
            <person name="Boeckmann B."/>
            <person name="Pfister A."/>
            <person name="Boutet E."/>
            <person name="Rubio M.C."/>
            <person name="Denervaud-Tendon V."/>
            <person name="Vermeer J.E."/>
            <person name="Gheyselinck J."/>
            <person name="Xenarios I."/>
            <person name="Geldner N."/>
        </authorList>
    </citation>
    <scope>GENE FAMILY</scope>
    <scope>NOMENCLATURE</scope>
</reference>
<proteinExistence type="evidence at transcript level"/>
<feature type="chain" id="PRO_0000376093" description="CASP-like protein 2B1">
    <location>
        <begin position="1"/>
        <end position="202"/>
    </location>
</feature>
<feature type="topological domain" description="Cytoplasmic" evidence="2">
    <location>
        <begin position="1"/>
        <end position="29"/>
    </location>
</feature>
<feature type="transmembrane region" description="Helical" evidence="2">
    <location>
        <begin position="30"/>
        <end position="50"/>
    </location>
</feature>
<feature type="topological domain" description="Extracellular" evidence="2">
    <location>
        <begin position="51"/>
        <end position="72"/>
    </location>
</feature>
<feature type="transmembrane region" description="Helical" evidence="2">
    <location>
        <begin position="73"/>
        <end position="93"/>
    </location>
</feature>
<feature type="topological domain" description="Cytoplasmic" evidence="2">
    <location>
        <begin position="94"/>
        <end position="109"/>
    </location>
</feature>
<feature type="transmembrane region" description="Helical" evidence="2">
    <location>
        <begin position="110"/>
        <end position="132"/>
    </location>
</feature>
<feature type="topological domain" description="Extracellular" evidence="2">
    <location>
        <begin position="133"/>
        <end position="164"/>
    </location>
</feature>
<feature type="transmembrane region" description="Helical" evidence="2">
    <location>
        <begin position="165"/>
        <end position="185"/>
    </location>
</feature>
<feature type="topological domain" description="Cytoplasmic" evidence="2">
    <location>
        <begin position="186"/>
        <end position="202"/>
    </location>
</feature>
<feature type="sequence conflict" description="In Ref. 3; CV229733." evidence="3" ref="3">
    <original>S</original>
    <variation>G</variation>
    <location>
        <position position="168"/>
    </location>
</feature>
<organism>
    <name type="scientific">Populus trichocarpa</name>
    <name type="common">Western balsam poplar</name>
    <name type="synonym">Populus balsamifera subsp. trichocarpa</name>
    <dbReference type="NCBI Taxonomy" id="3694"/>
    <lineage>
        <taxon>Eukaryota</taxon>
        <taxon>Viridiplantae</taxon>
        <taxon>Streptophyta</taxon>
        <taxon>Embryophyta</taxon>
        <taxon>Tracheophyta</taxon>
        <taxon>Spermatophyta</taxon>
        <taxon>Magnoliopsida</taxon>
        <taxon>eudicotyledons</taxon>
        <taxon>Gunneridae</taxon>
        <taxon>Pentapetalae</taxon>
        <taxon>rosids</taxon>
        <taxon>fabids</taxon>
        <taxon>Malpighiales</taxon>
        <taxon>Salicaceae</taxon>
        <taxon>Saliceae</taxon>
        <taxon>Populus</taxon>
    </lineage>
</organism>
<evidence type="ECO:0000250" key="1"/>
<evidence type="ECO:0000255" key="2"/>
<evidence type="ECO:0000305" key="3"/>
<keyword id="KW-1003">Cell membrane</keyword>
<keyword id="KW-0472">Membrane</keyword>
<keyword id="KW-1185">Reference proteome</keyword>
<keyword id="KW-0812">Transmembrane</keyword>
<keyword id="KW-1133">Transmembrane helix</keyword>
<sequence>MSYLGVGVSPGNVPVYHGTNSKVIDRRVRLAELVLRCVICCLGVLAAVLVGTDTQVKEIFSIQKKARFTDMKALVFLVAANGIAAAYSFVQGVRCVVGMVKGSVLFSKPLAWVIFSGDQMMAYLTMSAVAAAAQSSVFAKLGQPDLQWMKICTMYGKFCNQVGEGIASALLVSVSMVVLSCISAFSLFRLYGGNKGKDGARW</sequence>
<name>CSPLJ_POPTR</name>
<dbReference type="EMBL" id="CM009305">
    <property type="protein sequence ID" value="EEF04894.1"/>
    <property type="molecule type" value="Genomic_DNA"/>
</dbReference>
<dbReference type="EMBL" id="CV229733">
    <property type="status" value="NOT_ANNOTATED_CDS"/>
    <property type="molecule type" value="mRNA"/>
</dbReference>
<dbReference type="RefSeq" id="XP_002323133.1">
    <property type="nucleotide sequence ID" value="XM_002323097.2"/>
</dbReference>
<dbReference type="SMR" id="B9IH36"/>
<dbReference type="FunCoup" id="B9IH36">
    <property type="interactions" value="108"/>
</dbReference>
<dbReference type="STRING" id="3694.B9IH36"/>
<dbReference type="KEGG" id="pop:7453677"/>
<dbReference type="InParanoid" id="B9IH36"/>
<dbReference type="OrthoDB" id="689701at2759"/>
<dbReference type="Proteomes" id="UP000006729">
    <property type="component" value="Chromosome 16"/>
</dbReference>
<dbReference type="ExpressionAtlas" id="B9IH36">
    <property type="expression patterns" value="baseline and differential"/>
</dbReference>
<dbReference type="GO" id="GO:0005886">
    <property type="term" value="C:plasma membrane"/>
    <property type="evidence" value="ECO:0007669"/>
    <property type="project" value="UniProtKB-SubCell"/>
</dbReference>
<dbReference type="InterPro" id="IPR006459">
    <property type="entry name" value="CASP/CASPL"/>
</dbReference>
<dbReference type="InterPro" id="IPR006702">
    <property type="entry name" value="CASP_dom"/>
</dbReference>
<dbReference type="NCBIfam" id="TIGR01569">
    <property type="entry name" value="A_tha_TIGR01569"/>
    <property type="match status" value="1"/>
</dbReference>
<dbReference type="PANTHER" id="PTHR33573:SF64">
    <property type="entry name" value="CASP-LIKE PROTEIN 2B1"/>
    <property type="match status" value="1"/>
</dbReference>
<dbReference type="PANTHER" id="PTHR33573">
    <property type="entry name" value="CASP-LIKE PROTEIN 4A4"/>
    <property type="match status" value="1"/>
</dbReference>
<dbReference type="Pfam" id="PF04535">
    <property type="entry name" value="CASP_dom"/>
    <property type="match status" value="1"/>
</dbReference>